<proteinExistence type="predicted"/>
<accession>P29571</accession>
<reference key="1">
    <citation type="journal article" date="1992" name="Nucleic Acids Res.">
        <title>Modular organization of related Archaeal plasmids encoding different restriction-modification systems in Methanobacterium thermoformicicum.</title>
        <authorList>
            <person name="Noelling J."/>
            <person name="van Eeden F.J.M."/>
            <person name="Eggen R.I.L."/>
            <person name="de Vos W.M."/>
        </authorList>
    </citation>
    <scope>NUCLEOTIDE SEQUENCE [GENOMIC DNA]</scope>
    <source>
        <strain>DSM 3848 / THF</strain>
    </source>
</reference>
<dbReference type="EMBL" id="X68366">
    <property type="protein sequence ID" value="CAA48426.1"/>
    <property type="molecule type" value="Genomic_DNA"/>
</dbReference>
<dbReference type="PIR" id="S30302">
    <property type="entry name" value="S26437"/>
</dbReference>
<dbReference type="RefSeq" id="NP_039755.1">
    <property type="nucleotide sequence ID" value="NC_001336.1"/>
</dbReference>
<dbReference type="RefSeq" id="WP_010889841.1">
    <property type="nucleotide sequence ID" value="NC_001336.1"/>
</dbReference>
<dbReference type="InterPro" id="IPR024524">
    <property type="entry name" value="DUF3800"/>
</dbReference>
<dbReference type="Pfam" id="PF12686">
    <property type="entry name" value="DUF3800"/>
    <property type="match status" value="1"/>
</dbReference>
<name>YPV2_METTF</name>
<feature type="chain" id="PRO_0000066427" description="Uncharacterized protein ORF2">
    <location>
        <begin position="1"/>
        <end position="284"/>
    </location>
</feature>
<organism>
    <name type="scientific">Methanothermobacter thermautotrophicus</name>
    <name type="common">Methanobacterium thermoformicicum</name>
    <dbReference type="NCBI Taxonomy" id="145262"/>
    <lineage>
        <taxon>Archaea</taxon>
        <taxon>Methanobacteriati</taxon>
        <taxon>Methanobacteriota</taxon>
        <taxon>Methanomada group</taxon>
        <taxon>Methanobacteria</taxon>
        <taxon>Methanobacteriales</taxon>
        <taxon>Methanobacteriaceae</taxon>
        <taxon>Methanothermobacter</taxon>
    </lineage>
</organism>
<protein>
    <recommendedName>
        <fullName>Uncharacterized protein ORF2</fullName>
    </recommendedName>
</protein>
<sequence>MNSGNLFFGWADESSQNKGRYRAIGMVSHPAEFESKLEGDINNILDYVFDESGLKRRELKWNKIDIFRCRAYERIVDYFLEHTGLGNPPFRVDILRWDIEDSRHSIQGRDDNQNLQRMYYHLFSNVISKRWPSGDWCFFPDKTGSVDWGELASFLDLGGSKVDLNERFNIRSINEVDSKDNVLVQVADFFAGLSVFSKEKLGLYVDWKFEKRGQQRLVPVEKIDLSKKDRRRFKILSYFEEGCEKLKIGVVLDRSKGLWTPNPANSINFWHYEPQSDADKAPTR</sequence>
<keyword id="KW-0614">Plasmid</keyword>
<geneLocation type="plasmid">
    <name>pFV1</name>
</geneLocation>